<keyword id="KW-0963">Cytoplasm</keyword>
<keyword id="KW-0342">GTP-binding</keyword>
<keyword id="KW-0378">Hydrolase</keyword>
<keyword id="KW-0460">Magnesium</keyword>
<keyword id="KW-0479">Metal-binding</keyword>
<keyword id="KW-0547">Nucleotide-binding</keyword>
<evidence type="ECO:0000255" key="1">
    <source>
        <dbReference type="HAMAP-Rule" id="MF_01454"/>
    </source>
</evidence>
<evidence type="ECO:0000255" key="2">
    <source>
        <dbReference type="PROSITE-ProRule" id="PRU01231"/>
    </source>
</evidence>
<evidence type="ECO:0000256" key="3">
    <source>
        <dbReference type="SAM" id="MobiDB-lite"/>
    </source>
</evidence>
<comment type="function">
    <text evidence="1">An essential GTPase which binds GTP, GDP and possibly (p)ppGpp with moderate affinity, with high nucleotide exchange rates and a fairly low GTP hydrolysis rate. Plays a role in control of the cell cycle, stress response, ribosome biogenesis and in those bacteria that undergo differentiation, in morphogenesis control.</text>
</comment>
<comment type="cofactor">
    <cofactor evidence="1">
        <name>Mg(2+)</name>
        <dbReference type="ChEBI" id="CHEBI:18420"/>
    </cofactor>
</comment>
<comment type="subunit">
    <text evidence="1">Monomer.</text>
</comment>
<comment type="subcellular location">
    <subcellularLocation>
        <location evidence="1">Cytoplasm</location>
    </subcellularLocation>
</comment>
<comment type="similarity">
    <text evidence="1">Belongs to the TRAFAC class OBG-HflX-like GTPase superfamily. OBG GTPase family.</text>
</comment>
<reference key="1">
    <citation type="submission" date="2008-02" db="EMBL/GenBank/DDBJ databases">
        <title>Complete sequence of Yersinia pseudotuberculosis YPIII.</title>
        <authorList>
            <consortium name="US DOE Joint Genome Institute"/>
            <person name="Copeland A."/>
            <person name="Lucas S."/>
            <person name="Lapidus A."/>
            <person name="Glavina del Rio T."/>
            <person name="Dalin E."/>
            <person name="Tice H."/>
            <person name="Bruce D."/>
            <person name="Goodwin L."/>
            <person name="Pitluck S."/>
            <person name="Munk A.C."/>
            <person name="Brettin T."/>
            <person name="Detter J.C."/>
            <person name="Han C."/>
            <person name="Tapia R."/>
            <person name="Schmutz J."/>
            <person name="Larimer F."/>
            <person name="Land M."/>
            <person name="Hauser L."/>
            <person name="Challacombe J.F."/>
            <person name="Green L."/>
            <person name="Lindler L.E."/>
            <person name="Nikolich M.P."/>
            <person name="Richardson P."/>
        </authorList>
    </citation>
    <scope>NUCLEOTIDE SEQUENCE [LARGE SCALE GENOMIC DNA]</scope>
    <source>
        <strain>YPIII</strain>
    </source>
</reference>
<proteinExistence type="inferred from homology"/>
<name>OBG_YERPY</name>
<dbReference type="EC" id="3.6.5.-" evidence="1"/>
<dbReference type="EMBL" id="CP000950">
    <property type="protein sequence ID" value="ACA70010.1"/>
    <property type="molecule type" value="Genomic_DNA"/>
</dbReference>
<dbReference type="SMR" id="B1JMI3"/>
<dbReference type="KEGG" id="ypy:YPK_3743"/>
<dbReference type="PATRIC" id="fig|502800.11.peg.91"/>
<dbReference type="GO" id="GO:0005737">
    <property type="term" value="C:cytoplasm"/>
    <property type="evidence" value="ECO:0007669"/>
    <property type="project" value="UniProtKB-SubCell"/>
</dbReference>
<dbReference type="GO" id="GO:0005525">
    <property type="term" value="F:GTP binding"/>
    <property type="evidence" value="ECO:0007669"/>
    <property type="project" value="UniProtKB-UniRule"/>
</dbReference>
<dbReference type="GO" id="GO:0003924">
    <property type="term" value="F:GTPase activity"/>
    <property type="evidence" value="ECO:0007669"/>
    <property type="project" value="UniProtKB-UniRule"/>
</dbReference>
<dbReference type="GO" id="GO:0000287">
    <property type="term" value="F:magnesium ion binding"/>
    <property type="evidence" value="ECO:0007669"/>
    <property type="project" value="InterPro"/>
</dbReference>
<dbReference type="GO" id="GO:0042254">
    <property type="term" value="P:ribosome biogenesis"/>
    <property type="evidence" value="ECO:0007669"/>
    <property type="project" value="UniProtKB-UniRule"/>
</dbReference>
<dbReference type="CDD" id="cd01898">
    <property type="entry name" value="Obg"/>
    <property type="match status" value="1"/>
</dbReference>
<dbReference type="FunFam" id="2.70.210.12:FF:000001">
    <property type="entry name" value="GTPase Obg"/>
    <property type="match status" value="1"/>
</dbReference>
<dbReference type="FunFam" id="3.40.50.300:FF:000185">
    <property type="entry name" value="GTPase Obg"/>
    <property type="match status" value="1"/>
</dbReference>
<dbReference type="Gene3D" id="2.70.210.12">
    <property type="entry name" value="GTP1/OBG domain"/>
    <property type="match status" value="1"/>
</dbReference>
<dbReference type="Gene3D" id="3.40.50.300">
    <property type="entry name" value="P-loop containing nucleotide triphosphate hydrolases"/>
    <property type="match status" value="1"/>
</dbReference>
<dbReference type="HAMAP" id="MF_01454">
    <property type="entry name" value="GTPase_Obg"/>
    <property type="match status" value="1"/>
</dbReference>
<dbReference type="InterPro" id="IPR031167">
    <property type="entry name" value="G_OBG"/>
</dbReference>
<dbReference type="InterPro" id="IPR006073">
    <property type="entry name" value="GTP-bd"/>
</dbReference>
<dbReference type="InterPro" id="IPR014100">
    <property type="entry name" value="GTP-bd_Obg/CgtA"/>
</dbReference>
<dbReference type="InterPro" id="IPR006074">
    <property type="entry name" value="GTP1-OBG_CS"/>
</dbReference>
<dbReference type="InterPro" id="IPR006169">
    <property type="entry name" value="GTP1_OBG_dom"/>
</dbReference>
<dbReference type="InterPro" id="IPR036726">
    <property type="entry name" value="GTP1_OBG_dom_sf"/>
</dbReference>
<dbReference type="InterPro" id="IPR045086">
    <property type="entry name" value="OBG_GTPase"/>
</dbReference>
<dbReference type="InterPro" id="IPR027417">
    <property type="entry name" value="P-loop_NTPase"/>
</dbReference>
<dbReference type="NCBIfam" id="TIGR02729">
    <property type="entry name" value="Obg_CgtA"/>
    <property type="match status" value="1"/>
</dbReference>
<dbReference type="NCBIfam" id="NF008955">
    <property type="entry name" value="PRK12297.1"/>
    <property type="match status" value="1"/>
</dbReference>
<dbReference type="NCBIfam" id="NF008956">
    <property type="entry name" value="PRK12299.1"/>
    <property type="match status" value="1"/>
</dbReference>
<dbReference type="PANTHER" id="PTHR11702">
    <property type="entry name" value="DEVELOPMENTALLY REGULATED GTP-BINDING PROTEIN-RELATED"/>
    <property type="match status" value="1"/>
</dbReference>
<dbReference type="PANTHER" id="PTHR11702:SF31">
    <property type="entry name" value="MITOCHONDRIAL RIBOSOME-ASSOCIATED GTPASE 2"/>
    <property type="match status" value="1"/>
</dbReference>
<dbReference type="Pfam" id="PF01018">
    <property type="entry name" value="GTP1_OBG"/>
    <property type="match status" value="1"/>
</dbReference>
<dbReference type="Pfam" id="PF01926">
    <property type="entry name" value="MMR_HSR1"/>
    <property type="match status" value="1"/>
</dbReference>
<dbReference type="PIRSF" id="PIRSF002401">
    <property type="entry name" value="GTP_bd_Obg/CgtA"/>
    <property type="match status" value="1"/>
</dbReference>
<dbReference type="PRINTS" id="PR00326">
    <property type="entry name" value="GTP1OBG"/>
</dbReference>
<dbReference type="SUPFAM" id="SSF82051">
    <property type="entry name" value="Obg GTP-binding protein N-terminal domain"/>
    <property type="match status" value="1"/>
</dbReference>
<dbReference type="SUPFAM" id="SSF52540">
    <property type="entry name" value="P-loop containing nucleoside triphosphate hydrolases"/>
    <property type="match status" value="1"/>
</dbReference>
<dbReference type="PROSITE" id="PS51710">
    <property type="entry name" value="G_OBG"/>
    <property type="match status" value="1"/>
</dbReference>
<dbReference type="PROSITE" id="PS00905">
    <property type="entry name" value="GTP1_OBG"/>
    <property type="match status" value="1"/>
</dbReference>
<dbReference type="PROSITE" id="PS51883">
    <property type="entry name" value="OBG"/>
    <property type="match status" value="1"/>
</dbReference>
<feature type="chain" id="PRO_0000386414" description="GTPase Obg">
    <location>
        <begin position="1"/>
        <end position="390"/>
    </location>
</feature>
<feature type="domain" description="Obg" evidence="2">
    <location>
        <begin position="1"/>
        <end position="159"/>
    </location>
</feature>
<feature type="domain" description="OBG-type G" evidence="1">
    <location>
        <begin position="160"/>
        <end position="333"/>
    </location>
</feature>
<feature type="region of interest" description="Disordered" evidence="3">
    <location>
        <begin position="364"/>
        <end position="390"/>
    </location>
</feature>
<feature type="compositionally biased region" description="Acidic residues" evidence="3">
    <location>
        <begin position="364"/>
        <end position="384"/>
    </location>
</feature>
<feature type="binding site" evidence="1">
    <location>
        <begin position="166"/>
        <end position="173"/>
    </location>
    <ligand>
        <name>GTP</name>
        <dbReference type="ChEBI" id="CHEBI:37565"/>
    </ligand>
</feature>
<feature type="binding site" evidence="1">
    <location>
        <position position="173"/>
    </location>
    <ligand>
        <name>Mg(2+)</name>
        <dbReference type="ChEBI" id="CHEBI:18420"/>
    </ligand>
</feature>
<feature type="binding site" evidence="1">
    <location>
        <begin position="191"/>
        <end position="195"/>
    </location>
    <ligand>
        <name>GTP</name>
        <dbReference type="ChEBI" id="CHEBI:37565"/>
    </ligand>
</feature>
<feature type="binding site" evidence="1">
    <location>
        <position position="193"/>
    </location>
    <ligand>
        <name>Mg(2+)</name>
        <dbReference type="ChEBI" id="CHEBI:18420"/>
    </ligand>
</feature>
<feature type="binding site" evidence="1">
    <location>
        <begin position="213"/>
        <end position="216"/>
    </location>
    <ligand>
        <name>GTP</name>
        <dbReference type="ChEBI" id="CHEBI:37565"/>
    </ligand>
</feature>
<feature type="binding site" evidence="1">
    <location>
        <begin position="283"/>
        <end position="286"/>
    </location>
    <ligand>
        <name>GTP</name>
        <dbReference type="ChEBI" id="CHEBI:37565"/>
    </ligand>
</feature>
<feature type="binding site" evidence="1">
    <location>
        <begin position="314"/>
        <end position="316"/>
    </location>
    <ligand>
        <name>GTP</name>
        <dbReference type="ChEBI" id="CHEBI:37565"/>
    </ligand>
</feature>
<accession>B1JMI3</accession>
<organism>
    <name type="scientific">Yersinia pseudotuberculosis serotype O:3 (strain YPIII)</name>
    <dbReference type="NCBI Taxonomy" id="502800"/>
    <lineage>
        <taxon>Bacteria</taxon>
        <taxon>Pseudomonadati</taxon>
        <taxon>Pseudomonadota</taxon>
        <taxon>Gammaproteobacteria</taxon>
        <taxon>Enterobacterales</taxon>
        <taxon>Yersiniaceae</taxon>
        <taxon>Yersinia</taxon>
    </lineage>
</organism>
<sequence>MKFVDEAAILVVAGDGGNGCVSFRREKYIPNGGPDGGDGGDGGDIYLLADENLNTLIDYRFVKSFRAERGQNGQSRDCTGKRGKDITIKVPVGTRVLDQGTGEIVGDMVRHGQRLMVAKGGFHGLGNSRFKSSVNRAPRQKTMGTEGETRELMLELLLLADVGMLGLPNAGKSTFIRAVSAAKPKVADYPFTTLIPSLGVVRMDYEQSFVIADIPGLIEGASDGAGLGIRFLKHLERCRVLLHLVDLAPIDESDPAENAKVIVNELQQYSENLAEKPRWLVFNKIDLIDPEEAEKRAKAIVETLGWEGKYYMISAANRDNVNALCWDVMSFLNSQPKAMAIAESVPEKVEFMWDDYHREQLAEVEAEAEDDWDDDWDEEDDDGVEIIYER</sequence>
<protein>
    <recommendedName>
        <fullName evidence="1">GTPase Obg</fullName>
        <ecNumber evidence="1">3.6.5.-</ecNumber>
    </recommendedName>
    <alternativeName>
        <fullName evidence="1">GTP-binding protein Obg</fullName>
    </alternativeName>
</protein>
<gene>
    <name evidence="1" type="primary">obg</name>
    <name type="ordered locus">YPK_3743</name>
</gene>